<sequence>MNFNSFRKEIYSGNASVKELVNEFFLKIDSLNPKINAYTCLTKKIANSQSENIDKLITNNQKLPSLAGIPIAIKDNICTKGVVTSCSSKMLKDFVSPYESSASGKLWSLGGICLGKTNLDEFAMGSSTETSVFGTTSNPWDVNRVPGGSSGGSAASVAAGLCLAAIGSDTGGSIRQPASFCGVVGLKPTYGRVSRWGLIAFASSLDQIGPITNTVSDAAEILYSISGKDNLDSTCLDKPVPNYLSDLDKSIKGIKIGIIEECFDHPGLDPEVKESVLSSVERFRSLGAEIHDIKCPRFNDGIATYYVIAPCEASANLARYDGVKYGYRSEGESNLLEMICKSRAEGFGDEVQRRILIGTYALSAGYSDAYYKKAQRVRTLIRSDFDNAFNEVDVLLTPTCPTTAFLKGDFVNDPLSMYLSDLLTVPVNLAGLPAISIPCGFDKKGLPIGLQLIGNVLEEHRILNVANIFEKDAEVMNTKPNIEI</sequence>
<organism>
    <name type="scientific">Prochlorococcus marinus subsp. pastoris (strain CCMP1986 / NIES-2087 / MED4)</name>
    <dbReference type="NCBI Taxonomy" id="59919"/>
    <lineage>
        <taxon>Bacteria</taxon>
        <taxon>Bacillati</taxon>
        <taxon>Cyanobacteriota</taxon>
        <taxon>Cyanophyceae</taxon>
        <taxon>Synechococcales</taxon>
        <taxon>Prochlorococcaceae</taxon>
        <taxon>Prochlorococcus</taxon>
    </lineage>
</organism>
<proteinExistence type="inferred from homology"/>
<reference key="1">
    <citation type="journal article" date="2003" name="Nature">
        <title>Genome divergence in two Prochlorococcus ecotypes reflects oceanic niche differentiation.</title>
        <authorList>
            <person name="Rocap G."/>
            <person name="Larimer F.W."/>
            <person name="Lamerdin J.E."/>
            <person name="Malfatti S."/>
            <person name="Chain P."/>
            <person name="Ahlgren N.A."/>
            <person name="Arellano A."/>
            <person name="Coleman M."/>
            <person name="Hauser L."/>
            <person name="Hess W.R."/>
            <person name="Johnson Z.I."/>
            <person name="Land M.L."/>
            <person name="Lindell D."/>
            <person name="Post A.F."/>
            <person name="Regala W."/>
            <person name="Shah M."/>
            <person name="Shaw S.L."/>
            <person name="Steglich C."/>
            <person name="Sullivan M.B."/>
            <person name="Ting C.S."/>
            <person name="Tolonen A."/>
            <person name="Webb E.A."/>
            <person name="Zinser E.R."/>
            <person name="Chisholm S.W."/>
        </authorList>
    </citation>
    <scope>NUCLEOTIDE SEQUENCE [LARGE SCALE GENOMIC DNA]</scope>
    <source>
        <strain>CCMP1986 / NIES-2087 / MED4</strain>
    </source>
</reference>
<comment type="function">
    <text evidence="1">Allows the formation of correctly charged Gln-tRNA(Gln) through the transamidation of misacylated Glu-tRNA(Gln) in organisms which lack glutaminyl-tRNA synthetase. The reaction takes place in the presence of glutamine and ATP through an activated gamma-phospho-Glu-tRNA(Gln).</text>
</comment>
<comment type="catalytic activity">
    <reaction evidence="1">
        <text>L-glutamyl-tRNA(Gln) + L-glutamine + ATP + H2O = L-glutaminyl-tRNA(Gln) + L-glutamate + ADP + phosphate + H(+)</text>
        <dbReference type="Rhea" id="RHEA:17521"/>
        <dbReference type="Rhea" id="RHEA-COMP:9681"/>
        <dbReference type="Rhea" id="RHEA-COMP:9684"/>
        <dbReference type="ChEBI" id="CHEBI:15377"/>
        <dbReference type="ChEBI" id="CHEBI:15378"/>
        <dbReference type="ChEBI" id="CHEBI:29985"/>
        <dbReference type="ChEBI" id="CHEBI:30616"/>
        <dbReference type="ChEBI" id="CHEBI:43474"/>
        <dbReference type="ChEBI" id="CHEBI:58359"/>
        <dbReference type="ChEBI" id="CHEBI:78520"/>
        <dbReference type="ChEBI" id="CHEBI:78521"/>
        <dbReference type="ChEBI" id="CHEBI:456216"/>
        <dbReference type="EC" id="6.3.5.7"/>
    </reaction>
</comment>
<comment type="subunit">
    <text evidence="1">Heterotrimer of A, B and C subunits.</text>
</comment>
<comment type="similarity">
    <text evidence="1">Belongs to the amidase family. GatA subfamily.</text>
</comment>
<evidence type="ECO:0000255" key="1">
    <source>
        <dbReference type="HAMAP-Rule" id="MF_00120"/>
    </source>
</evidence>
<protein>
    <recommendedName>
        <fullName evidence="1">Glutamyl-tRNA(Gln) amidotransferase subunit A</fullName>
        <shortName evidence="1">Glu-ADT subunit A</shortName>
        <ecNumber evidence="1">6.3.5.7</ecNumber>
    </recommendedName>
</protein>
<gene>
    <name evidence="1" type="primary">gatA</name>
    <name type="ordered locus">PMM0946</name>
</gene>
<dbReference type="EC" id="6.3.5.7" evidence="1"/>
<dbReference type="EMBL" id="BX548174">
    <property type="protein sequence ID" value="CAE19405.1"/>
    <property type="molecule type" value="Genomic_DNA"/>
</dbReference>
<dbReference type="RefSeq" id="WP_011132579.1">
    <property type="nucleotide sequence ID" value="NC_005072.1"/>
</dbReference>
<dbReference type="SMR" id="Q7V1D0"/>
<dbReference type="STRING" id="59919.PMM0946"/>
<dbReference type="KEGG" id="pmm:PMM0946"/>
<dbReference type="eggNOG" id="COG0154">
    <property type="taxonomic scope" value="Bacteria"/>
</dbReference>
<dbReference type="HOGENOM" id="CLU_009600_0_3_3"/>
<dbReference type="OrthoDB" id="9811471at2"/>
<dbReference type="Proteomes" id="UP000001026">
    <property type="component" value="Chromosome"/>
</dbReference>
<dbReference type="GO" id="GO:0030956">
    <property type="term" value="C:glutamyl-tRNA(Gln) amidotransferase complex"/>
    <property type="evidence" value="ECO:0007669"/>
    <property type="project" value="InterPro"/>
</dbReference>
<dbReference type="GO" id="GO:0005524">
    <property type="term" value="F:ATP binding"/>
    <property type="evidence" value="ECO:0007669"/>
    <property type="project" value="UniProtKB-KW"/>
</dbReference>
<dbReference type="GO" id="GO:0050567">
    <property type="term" value="F:glutaminyl-tRNA synthase (glutamine-hydrolyzing) activity"/>
    <property type="evidence" value="ECO:0007669"/>
    <property type="project" value="UniProtKB-UniRule"/>
</dbReference>
<dbReference type="GO" id="GO:0006412">
    <property type="term" value="P:translation"/>
    <property type="evidence" value="ECO:0007669"/>
    <property type="project" value="UniProtKB-UniRule"/>
</dbReference>
<dbReference type="Gene3D" id="3.90.1300.10">
    <property type="entry name" value="Amidase signature (AS) domain"/>
    <property type="match status" value="1"/>
</dbReference>
<dbReference type="HAMAP" id="MF_00120">
    <property type="entry name" value="GatA"/>
    <property type="match status" value="1"/>
</dbReference>
<dbReference type="InterPro" id="IPR000120">
    <property type="entry name" value="Amidase"/>
</dbReference>
<dbReference type="InterPro" id="IPR020556">
    <property type="entry name" value="Amidase_CS"/>
</dbReference>
<dbReference type="InterPro" id="IPR023631">
    <property type="entry name" value="Amidase_dom"/>
</dbReference>
<dbReference type="InterPro" id="IPR036928">
    <property type="entry name" value="AS_sf"/>
</dbReference>
<dbReference type="InterPro" id="IPR004412">
    <property type="entry name" value="GatA"/>
</dbReference>
<dbReference type="NCBIfam" id="TIGR00132">
    <property type="entry name" value="gatA"/>
    <property type="match status" value="1"/>
</dbReference>
<dbReference type="PANTHER" id="PTHR11895:SF151">
    <property type="entry name" value="GLUTAMYL-TRNA(GLN) AMIDOTRANSFERASE SUBUNIT A"/>
    <property type="match status" value="1"/>
</dbReference>
<dbReference type="PANTHER" id="PTHR11895">
    <property type="entry name" value="TRANSAMIDASE"/>
    <property type="match status" value="1"/>
</dbReference>
<dbReference type="Pfam" id="PF01425">
    <property type="entry name" value="Amidase"/>
    <property type="match status" value="1"/>
</dbReference>
<dbReference type="SUPFAM" id="SSF75304">
    <property type="entry name" value="Amidase signature (AS) enzymes"/>
    <property type="match status" value="1"/>
</dbReference>
<dbReference type="PROSITE" id="PS00571">
    <property type="entry name" value="AMIDASES"/>
    <property type="match status" value="1"/>
</dbReference>
<keyword id="KW-0067">ATP-binding</keyword>
<keyword id="KW-0436">Ligase</keyword>
<keyword id="KW-0547">Nucleotide-binding</keyword>
<keyword id="KW-0648">Protein biosynthesis</keyword>
<name>GATA_PROMP</name>
<accession>Q7V1D0</accession>
<feature type="chain" id="PRO_0000105188" description="Glutamyl-tRNA(Gln) amidotransferase subunit A">
    <location>
        <begin position="1"/>
        <end position="484"/>
    </location>
</feature>
<feature type="active site" description="Charge relay system" evidence="1">
    <location>
        <position position="74"/>
    </location>
</feature>
<feature type="active site" description="Charge relay system" evidence="1">
    <location>
        <position position="149"/>
    </location>
</feature>
<feature type="active site" description="Acyl-ester intermediate" evidence="1">
    <location>
        <position position="173"/>
    </location>
</feature>